<organism>
    <name type="scientific">Kluyveromyces lactis (strain ATCC 8585 / CBS 2359 / DSM 70799 / NBRC 1267 / NRRL Y-1140 / WM37)</name>
    <name type="common">Yeast</name>
    <name type="synonym">Candida sphaerica</name>
    <dbReference type="NCBI Taxonomy" id="284590"/>
    <lineage>
        <taxon>Eukaryota</taxon>
        <taxon>Fungi</taxon>
        <taxon>Dikarya</taxon>
        <taxon>Ascomycota</taxon>
        <taxon>Saccharomycotina</taxon>
        <taxon>Saccharomycetes</taxon>
        <taxon>Saccharomycetales</taxon>
        <taxon>Saccharomycetaceae</taxon>
        <taxon>Kluyveromyces</taxon>
    </lineage>
</organism>
<accession>Q6CX49</accession>
<protein>
    <recommendedName>
        <fullName>Vacuolar protein 8</fullName>
    </recommendedName>
</protein>
<proteinExistence type="inferred from homology"/>
<feature type="initiator methionine" description="Removed" evidence="1">
    <location>
        <position position="1"/>
    </location>
</feature>
<feature type="chain" id="PRO_0000256214" description="Vacuolar protein 8">
    <location>
        <begin position="2"/>
        <end position="579"/>
    </location>
</feature>
<feature type="repeat" description="ARM 1">
    <location>
        <begin position="39"/>
        <end position="76"/>
    </location>
</feature>
<feature type="repeat" description="ARM 2">
    <location>
        <begin position="77"/>
        <end position="116"/>
    </location>
</feature>
<feature type="repeat" description="ARM 3">
    <location>
        <begin position="118"/>
        <end position="157"/>
    </location>
</feature>
<feature type="repeat" description="ARM 4">
    <location>
        <begin position="159"/>
        <end position="198"/>
    </location>
</feature>
<feature type="repeat" description="ARM 5">
    <location>
        <begin position="200"/>
        <end position="239"/>
    </location>
</feature>
<feature type="repeat" description="ARM 6">
    <location>
        <begin position="241"/>
        <end position="282"/>
    </location>
</feature>
<feature type="repeat" description="ARM 7">
    <location>
        <begin position="284"/>
        <end position="323"/>
    </location>
</feature>
<feature type="repeat" description="ARM 8">
    <location>
        <begin position="325"/>
        <end position="365"/>
    </location>
</feature>
<feature type="repeat" description="ARM 9">
    <location>
        <begin position="409"/>
        <end position="448"/>
    </location>
</feature>
<feature type="region of interest" description="Disordered" evidence="3">
    <location>
        <begin position="534"/>
        <end position="560"/>
    </location>
</feature>
<feature type="compositionally biased region" description="Polar residues" evidence="3">
    <location>
        <begin position="534"/>
        <end position="556"/>
    </location>
</feature>
<feature type="lipid moiety-binding region" description="N-myristoyl glycine" evidence="1">
    <location>
        <position position="2"/>
    </location>
</feature>
<feature type="lipid moiety-binding region" description="S-palmitoyl cysteine" evidence="2">
    <location>
        <position position="4"/>
    </location>
</feature>
<feature type="lipid moiety-binding region" description="S-palmitoyl cysteine" evidence="2">
    <location>
        <position position="5"/>
    </location>
</feature>
<feature type="lipid moiety-binding region" description="S-palmitoyl cysteine" evidence="2">
    <location>
        <position position="7"/>
    </location>
</feature>
<comment type="function">
    <text evidence="1">Functions in both vacuole inheritance and protein targeting from the cytoplasm to vacuole.</text>
</comment>
<comment type="subcellular location">
    <subcellularLocation>
        <location evidence="1">Vacuole membrane</location>
        <topology evidence="1">Lipid-anchor</topology>
    </subcellularLocation>
</comment>
<comment type="similarity">
    <text evidence="4">Belongs to the beta-catenin family.</text>
</comment>
<gene>
    <name type="primary">VAC8</name>
    <name type="ordered locus">KLLA0A11286g</name>
</gene>
<sequence length="579" mass="63770">MGLCCSCLRGESSLEDSTGLPIAENEREAVTSLLEFLENKDQYDFYSGKPLRALTTLVYSDNLNLQRSAALAFAEITEKYVSPVSRDVLEPILMLLTNPDPQIRIASCAALGNLAVNNENKLLIVEMGGLEPLIEQMKSDNVEVQCNAVGCITNLATQDDNKIEIAQSGALVPLTKLARSSNIRVQRNATGALLNMTHSGENRKELVDAGAVPVLVSLLSSMDADVQYYCTTALSNIAVDESNRRYLSKHAPKLVTKLVSLMNSTSPRVKCQATLALRNLASDTNYQLEIVRAGGLPDLVQLIQSDSLPLVLASVACIRNISIHPLNEGLIVDAGFLPPLVKLLDYQESEEIQCHAVSTLRNLAASSEKNRAEFFQSGVIEKFKQLALTCPISVQSEISACFAILALSDNTKYDLLQQDVLKVLIPMTMSQDQEISGNSAAAVANLISRVSNLEKILEYWGQPNDGIKGFLIRFLSSDFPTYEHIALWTILQLFECHNETIYKLIKEDQKLVNGVKKIADENYAVAREYMQDGQDTNIDHNGNSNNIEGNGRSNKQSSEKEDASFELYNITQQIIQFLV</sequence>
<name>VAC8_KLULA</name>
<reference key="1">
    <citation type="journal article" date="2004" name="Nature">
        <title>Genome evolution in yeasts.</title>
        <authorList>
            <person name="Dujon B."/>
            <person name="Sherman D."/>
            <person name="Fischer G."/>
            <person name="Durrens P."/>
            <person name="Casaregola S."/>
            <person name="Lafontaine I."/>
            <person name="de Montigny J."/>
            <person name="Marck C."/>
            <person name="Neuveglise C."/>
            <person name="Talla E."/>
            <person name="Goffard N."/>
            <person name="Frangeul L."/>
            <person name="Aigle M."/>
            <person name="Anthouard V."/>
            <person name="Babour A."/>
            <person name="Barbe V."/>
            <person name="Barnay S."/>
            <person name="Blanchin S."/>
            <person name="Beckerich J.-M."/>
            <person name="Beyne E."/>
            <person name="Bleykasten C."/>
            <person name="Boisrame A."/>
            <person name="Boyer J."/>
            <person name="Cattolico L."/>
            <person name="Confanioleri F."/>
            <person name="de Daruvar A."/>
            <person name="Despons L."/>
            <person name="Fabre E."/>
            <person name="Fairhead C."/>
            <person name="Ferry-Dumazet H."/>
            <person name="Groppi A."/>
            <person name="Hantraye F."/>
            <person name="Hennequin C."/>
            <person name="Jauniaux N."/>
            <person name="Joyet P."/>
            <person name="Kachouri R."/>
            <person name="Kerrest A."/>
            <person name="Koszul R."/>
            <person name="Lemaire M."/>
            <person name="Lesur I."/>
            <person name="Ma L."/>
            <person name="Muller H."/>
            <person name="Nicaud J.-M."/>
            <person name="Nikolski M."/>
            <person name="Oztas S."/>
            <person name="Ozier-Kalogeropoulos O."/>
            <person name="Pellenz S."/>
            <person name="Potier S."/>
            <person name="Richard G.-F."/>
            <person name="Straub M.-L."/>
            <person name="Suleau A."/>
            <person name="Swennen D."/>
            <person name="Tekaia F."/>
            <person name="Wesolowski-Louvel M."/>
            <person name="Westhof E."/>
            <person name="Wirth B."/>
            <person name="Zeniou-Meyer M."/>
            <person name="Zivanovic Y."/>
            <person name="Bolotin-Fukuhara M."/>
            <person name="Thierry A."/>
            <person name="Bouchier C."/>
            <person name="Caudron B."/>
            <person name="Scarpelli C."/>
            <person name="Gaillardin C."/>
            <person name="Weissenbach J."/>
            <person name="Wincker P."/>
            <person name="Souciet J.-L."/>
        </authorList>
    </citation>
    <scope>NUCLEOTIDE SEQUENCE [LARGE SCALE GENOMIC DNA]</scope>
    <source>
        <strain>ATCC 8585 / CBS 2359 / DSM 70799 / NBRC 1267 / NRRL Y-1140 / WM37</strain>
    </source>
</reference>
<dbReference type="EMBL" id="CR382121">
    <property type="protein sequence ID" value="CAH03078.1"/>
    <property type="molecule type" value="Genomic_DNA"/>
</dbReference>
<dbReference type="RefSeq" id="XP_451490.1">
    <property type="nucleotide sequence ID" value="XM_451490.1"/>
</dbReference>
<dbReference type="SMR" id="Q6CX49"/>
<dbReference type="FunCoup" id="Q6CX49">
    <property type="interactions" value="144"/>
</dbReference>
<dbReference type="STRING" id="284590.Q6CX49"/>
<dbReference type="PaxDb" id="284590-Q6CX49"/>
<dbReference type="KEGG" id="kla:KLLA0_A11286g"/>
<dbReference type="eggNOG" id="KOG4224">
    <property type="taxonomic scope" value="Eukaryota"/>
</dbReference>
<dbReference type="HOGENOM" id="CLU_021483_0_0_1"/>
<dbReference type="InParanoid" id="Q6CX49"/>
<dbReference type="OMA" id="VWDKPDG"/>
<dbReference type="Proteomes" id="UP000000598">
    <property type="component" value="Chromosome A"/>
</dbReference>
<dbReference type="GO" id="GO:0000329">
    <property type="term" value="C:fungal-type vacuole membrane"/>
    <property type="evidence" value="ECO:0007669"/>
    <property type="project" value="TreeGrafter"/>
</dbReference>
<dbReference type="GO" id="GO:0043495">
    <property type="term" value="F:protein-membrane adaptor activity"/>
    <property type="evidence" value="ECO:0007669"/>
    <property type="project" value="InterPro"/>
</dbReference>
<dbReference type="GO" id="GO:0000045">
    <property type="term" value="P:autophagosome assembly"/>
    <property type="evidence" value="ECO:0007669"/>
    <property type="project" value="TreeGrafter"/>
</dbReference>
<dbReference type="GO" id="GO:0071562">
    <property type="term" value="P:nucleus-vacuole junction assembly"/>
    <property type="evidence" value="ECO:0007669"/>
    <property type="project" value="InterPro"/>
</dbReference>
<dbReference type="FunFam" id="1.25.10.10:FF:000131">
    <property type="entry name" value="Vacuolar protein 8"/>
    <property type="match status" value="1"/>
</dbReference>
<dbReference type="Gene3D" id="1.25.10.10">
    <property type="entry name" value="Leucine-rich Repeat Variant"/>
    <property type="match status" value="2"/>
</dbReference>
<dbReference type="InterPro" id="IPR011989">
    <property type="entry name" value="ARM-like"/>
</dbReference>
<dbReference type="InterPro" id="IPR016024">
    <property type="entry name" value="ARM-type_fold"/>
</dbReference>
<dbReference type="InterPro" id="IPR000225">
    <property type="entry name" value="Armadillo"/>
</dbReference>
<dbReference type="InterPro" id="IPR045156">
    <property type="entry name" value="Vac8"/>
</dbReference>
<dbReference type="PANTHER" id="PTHR47249">
    <property type="entry name" value="VACUOLAR PROTEIN 8"/>
    <property type="match status" value="1"/>
</dbReference>
<dbReference type="PANTHER" id="PTHR47249:SF1">
    <property type="entry name" value="VACUOLAR PROTEIN 8"/>
    <property type="match status" value="1"/>
</dbReference>
<dbReference type="Pfam" id="PF00514">
    <property type="entry name" value="Arm"/>
    <property type="match status" value="6"/>
</dbReference>
<dbReference type="Pfam" id="PF13513">
    <property type="entry name" value="HEAT_EZ"/>
    <property type="match status" value="1"/>
</dbReference>
<dbReference type="SMART" id="SM00185">
    <property type="entry name" value="ARM"/>
    <property type="match status" value="9"/>
</dbReference>
<dbReference type="SUPFAM" id="SSF48371">
    <property type="entry name" value="ARM repeat"/>
    <property type="match status" value="2"/>
</dbReference>
<dbReference type="PROSITE" id="PS50176">
    <property type="entry name" value="ARM_REPEAT"/>
    <property type="match status" value="7"/>
</dbReference>
<evidence type="ECO:0000250" key="1"/>
<evidence type="ECO:0000255" key="2"/>
<evidence type="ECO:0000256" key="3">
    <source>
        <dbReference type="SAM" id="MobiDB-lite"/>
    </source>
</evidence>
<evidence type="ECO:0000305" key="4"/>
<keyword id="KW-0449">Lipoprotein</keyword>
<keyword id="KW-0472">Membrane</keyword>
<keyword id="KW-0519">Myristate</keyword>
<keyword id="KW-0564">Palmitate</keyword>
<keyword id="KW-1185">Reference proteome</keyword>
<keyword id="KW-0677">Repeat</keyword>
<keyword id="KW-0926">Vacuole</keyword>